<keyword id="KW-0963">Cytoplasm</keyword>
<keyword id="KW-0378">Hydrolase</keyword>
<comment type="catalytic activity">
    <reaction evidence="1">
        <text>urea + 2 H2O + H(+) = hydrogencarbonate + 2 NH4(+)</text>
        <dbReference type="Rhea" id="RHEA:20557"/>
        <dbReference type="ChEBI" id="CHEBI:15377"/>
        <dbReference type="ChEBI" id="CHEBI:15378"/>
        <dbReference type="ChEBI" id="CHEBI:16199"/>
        <dbReference type="ChEBI" id="CHEBI:17544"/>
        <dbReference type="ChEBI" id="CHEBI:28938"/>
        <dbReference type="EC" id="3.5.1.5"/>
    </reaction>
</comment>
<comment type="pathway">
    <text evidence="1">Nitrogen metabolism; urea degradation; CO(2) and NH(3) from urea (urease route): step 1/1.</text>
</comment>
<comment type="subunit">
    <text evidence="1">Heterotrimer of UreA (gamma), UreB (beta) and UreC (alpha) subunits. Three heterotrimers associate to form the active enzyme.</text>
</comment>
<comment type="subcellular location">
    <subcellularLocation>
        <location evidence="1">Cytoplasm</location>
    </subcellularLocation>
</comment>
<comment type="similarity">
    <text evidence="1">Belongs to the urease gamma subunit family.</text>
</comment>
<evidence type="ECO:0000255" key="1">
    <source>
        <dbReference type="HAMAP-Rule" id="MF_00739"/>
    </source>
</evidence>
<feature type="chain" id="PRO_1000046318" description="Urease subunit gamma">
    <location>
        <begin position="1"/>
        <end position="100"/>
    </location>
</feature>
<protein>
    <recommendedName>
        <fullName evidence="1">Urease subunit gamma</fullName>
        <ecNumber evidence="1">3.5.1.5</ecNumber>
    </recommendedName>
    <alternativeName>
        <fullName evidence="1">Urea amidohydrolase subunit gamma</fullName>
    </alternativeName>
</protein>
<reference key="1">
    <citation type="journal article" date="2010" name="Genome Biol. Evol.">
        <title>Continuing evolution of Burkholderia mallei through genome reduction and large-scale rearrangements.</title>
        <authorList>
            <person name="Losada L."/>
            <person name="Ronning C.M."/>
            <person name="DeShazer D."/>
            <person name="Woods D."/>
            <person name="Fedorova N."/>
            <person name="Kim H.S."/>
            <person name="Shabalina S.A."/>
            <person name="Pearson T.R."/>
            <person name="Brinkac L."/>
            <person name="Tan P."/>
            <person name="Nandi T."/>
            <person name="Crabtree J."/>
            <person name="Badger J."/>
            <person name="Beckstrom-Sternberg S."/>
            <person name="Saqib M."/>
            <person name="Schutzer S.E."/>
            <person name="Keim P."/>
            <person name="Nierman W.C."/>
        </authorList>
    </citation>
    <scope>NUCLEOTIDE SEQUENCE [LARGE SCALE GENOMIC DNA]</scope>
    <source>
        <strain>1106a</strain>
    </source>
</reference>
<sequence length="100" mass="11172">MKLTPREKDKLLIFTAALLAERRRARGLKLNYPETVAFITAALMEAARDGRTVAEVMHYGTTLLTRDDVMEGVPEMIPDIQVEATFPDGTKLVTVHHPIP</sequence>
<proteinExistence type="inferred from homology"/>
<name>URE3_BURP0</name>
<gene>
    <name evidence="1" type="primary">ureA</name>
    <name type="ordered locus">BURPS1106A_3110</name>
</gene>
<accession>A3NYC7</accession>
<organism>
    <name type="scientific">Burkholderia pseudomallei (strain 1106a)</name>
    <dbReference type="NCBI Taxonomy" id="357348"/>
    <lineage>
        <taxon>Bacteria</taxon>
        <taxon>Pseudomonadati</taxon>
        <taxon>Pseudomonadota</taxon>
        <taxon>Betaproteobacteria</taxon>
        <taxon>Burkholderiales</taxon>
        <taxon>Burkholderiaceae</taxon>
        <taxon>Burkholderia</taxon>
        <taxon>pseudomallei group</taxon>
    </lineage>
</organism>
<dbReference type="EC" id="3.5.1.5" evidence="1"/>
<dbReference type="EMBL" id="CP000572">
    <property type="protein sequence ID" value="ABN90355.1"/>
    <property type="molecule type" value="Genomic_DNA"/>
</dbReference>
<dbReference type="RefSeq" id="WP_004186513.1">
    <property type="nucleotide sequence ID" value="NC_009076.1"/>
</dbReference>
<dbReference type="SMR" id="A3NYC7"/>
<dbReference type="GeneID" id="93061237"/>
<dbReference type="KEGG" id="bpl:BURPS1106A_3110"/>
<dbReference type="HOGENOM" id="CLU_145825_1_0_4"/>
<dbReference type="UniPathway" id="UPA00258">
    <property type="reaction ID" value="UER00370"/>
</dbReference>
<dbReference type="Proteomes" id="UP000006738">
    <property type="component" value="Chromosome I"/>
</dbReference>
<dbReference type="GO" id="GO:0005737">
    <property type="term" value="C:cytoplasm"/>
    <property type="evidence" value="ECO:0007669"/>
    <property type="project" value="UniProtKB-SubCell"/>
</dbReference>
<dbReference type="GO" id="GO:0016151">
    <property type="term" value="F:nickel cation binding"/>
    <property type="evidence" value="ECO:0007669"/>
    <property type="project" value="InterPro"/>
</dbReference>
<dbReference type="GO" id="GO:0009039">
    <property type="term" value="F:urease activity"/>
    <property type="evidence" value="ECO:0007669"/>
    <property type="project" value="UniProtKB-UniRule"/>
</dbReference>
<dbReference type="GO" id="GO:0043419">
    <property type="term" value="P:urea catabolic process"/>
    <property type="evidence" value="ECO:0007669"/>
    <property type="project" value="UniProtKB-UniRule"/>
</dbReference>
<dbReference type="CDD" id="cd00390">
    <property type="entry name" value="Urease_gamma"/>
    <property type="match status" value="1"/>
</dbReference>
<dbReference type="Gene3D" id="3.30.280.10">
    <property type="entry name" value="Urease, gamma-like subunit"/>
    <property type="match status" value="1"/>
</dbReference>
<dbReference type="HAMAP" id="MF_00739">
    <property type="entry name" value="Urease_gamma"/>
    <property type="match status" value="1"/>
</dbReference>
<dbReference type="InterPro" id="IPR012010">
    <property type="entry name" value="Urease_gamma"/>
</dbReference>
<dbReference type="InterPro" id="IPR002026">
    <property type="entry name" value="Urease_gamma/gamma-beta_su"/>
</dbReference>
<dbReference type="InterPro" id="IPR036463">
    <property type="entry name" value="Urease_gamma_sf"/>
</dbReference>
<dbReference type="InterPro" id="IPR050069">
    <property type="entry name" value="Urease_subunit"/>
</dbReference>
<dbReference type="NCBIfam" id="NF009712">
    <property type="entry name" value="PRK13241.1"/>
    <property type="match status" value="1"/>
</dbReference>
<dbReference type="NCBIfam" id="TIGR00193">
    <property type="entry name" value="urease_gam"/>
    <property type="match status" value="1"/>
</dbReference>
<dbReference type="PANTHER" id="PTHR33569">
    <property type="entry name" value="UREASE"/>
    <property type="match status" value="1"/>
</dbReference>
<dbReference type="PANTHER" id="PTHR33569:SF1">
    <property type="entry name" value="UREASE"/>
    <property type="match status" value="1"/>
</dbReference>
<dbReference type="Pfam" id="PF00547">
    <property type="entry name" value="Urease_gamma"/>
    <property type="match status" value="1"/>
</dbReference>
<dbReference type="PIRSF" id="PIRSF001223">
    <property type="entry name" value="Urease_gamma"/>
    <property type="match status" value="1"/>
</dbReference>
<dbReference type="SUPFAM" id="SSF54111">
    <property type="entry name" value="Urease, gamma-subunit"/>
    <property type="match status" value="1"/>
</dbReference>